<gene>
    <name evidence="1" type="primary">mnmA</name>
    <name type="ordered locus">Ava_4065</name>
</gene>
<accession>Q3M5R7</accession>
<sequence length="352" mass="38582">MKKVVVGLSGGVDSSTAAAILHNQGYEVIGLTLWLMKGKGQCCSEGMIDAAYICEQLGIPHEVVDMRDVFQTHIVDYLVTGYGAGITPLPCSQCNKTVKFGPMVQYAREQLGCDRIATGHYARISYDEASGRYQLLRAVDRNKDQSYFLYDLSQDLLAASLFPLGEMEKADTRRIATEHGLKTADKPESQDLCLVESNGSMRAFLDKYIAPKKGDIVDTAGKILGQHDGVHHYTIGQRKGLGIAAPEPLYVVELDAVNNKVVVGDRTKATQEECTVSRVNWVSIPEPSTPIRAAVQIRYRSAPEPVTVIPLENSRVRLVFDEPQFSITPGQAAVWYDGDKVLGGGIIEQFSN</sequence>
<name>MNMA_TRIV2</name>
<organism>
    <name type="scientific">Trichormus variabilis (strain ATCC 29413 / PCC 7937)</name>
    <name type="common">Anabaena variabilis</name>
    <dbReference type="NCBI Taxonomy" id="240292"/>
    <lineage>
        <taxon>Bacteria</taxon>
        <taxon>Bacillati</taxon>
        <taxon>Cyanobacteriota</taxon>
        <taxon>Cyanophyceae</taxon>
        <taxon>Nostocales</taxon>
        <taxon>Nostocaceae</taxon>
        <taxon>Trichormus</taxon>
    </lineage>
</organism>
<evidence type="ECO:0000255" key="1">
    <source>
        <dbReference type="HAMAP-Rule" id="MF_00144"/>
    </source>
</evidence>
<protein>
    <recommendedName>
        <fullName evidence="1">tRNA-specific 2-thiouridylase MnmA</fullName>
        <ecNumber evidence="1">2.8.1.13</ecNumber>
    </recommendedName>
</protein>
<dbReference type="EC" id="2.8.1.13" evidence="1"/>
<dbReference type="EMBL" id="CP000117">
    <property type="protein sequence ID" value="ABA23669.1"/>
    <property type="molecule type" value="Genomic_DNA"/>
</dbReference>
<dbReference type="SMR" id="Q3M5R7"/>
<dbReference type="STRING" id="240292.Ava_4065"/>
<dbReference type="KEGG" id="ava:Ava_4065"/>
<dbReference type="eggNOG" id="COG0482">
    <property type="taxonomic scope" value="Bacteria"/>
</dbReference>
<dbReference type="HOGENOM" id="CLU_035188_0_0_3"/>
<dbReference type="Proteomes" id="UP000002533">
    <property type="component" value="Chromosome"/>
</dbReference>
<dbReference type="GO" id="GO:0005737">
    <property type="term" value="C:cytoplasm"/>
    <property type="evidence" value="ECO:0007669"/>
    <property type="project" value="UniProtKB-SubCell"/>
</dbReference>
<dbReference type="GO" id="GO:0005524">
    <property type="term" value="F:ATP binding"/>
    <property type="evidence" value="ECO:0007669"/>
    <property type="project" value="UniProtKB-KW"/>
</dbReference>
<dbReference type="GO" id="GO:0000049">
    <property type="term" value="F:tRNA binding"/>
    <property type="evidence" value="ECO:0007669"/>
    <property type="project" value="UniProtKB-KW"/>
</dbReference>
<dbReference type="GO" id="GO:0103016">
    <property type="term" value="F:tRNA-uridine 2-sulfurtransferase activity"/>
    <property type="evidence" value="ECO:0007669"/>
    <property type="project" value="UniProtKB-EC"/>
</dbReference>
<dbReference type="GO" id="GO:0002143">
    <property type="term" value="P:tRNA wobble position uridine thiolation"/>
    <property type="evidence" value="ECO:0007669"/>
    <property type="project" value="TreeGrafter"/>
</dbReference>
<dbReference type="CDD" id="cd01998">
    <property type="entry name" value="MnmA_TRMU-like"/>
    <property type="match status" value="1"/>
</dbReference>
<dbReference type="FunFam" id="2.30.30.280:FF:000001">
    <property type="entry name" value="tRNA-specific 2-thiouridylase MnmA"/>
    <property type="match status" value="1"/>
</dbReference>
<dbReference type="FunFam" id="2.40.30.10:FF:000023">
    <property type="entry name" value="tRNA-specific 2-thiouridylase MnmA"/>
    <property type="match status" value="1"/>
</dbReference>
<dbReference type="FunFam" id="3.40.50.620:FF:000302">
    <property type="entry name" value="tRNA-specific 2-thiouridylase MnmA"/>
    <property type="match status" value="1"/>
</dbReference>
<dbReference type="Gene3D" id="2.30.30.280">
    <property type="entry name" value="Adenine nucleotide alpha hydrolases-like domains"/>
    <property type="match status" value="1"/>
</dbReference>
<dbReference type="Gene3D" id="3.40.50.620">
    <property type="entry name" value="HUPs"/>
    <property type="match status" value="1"/>
</dbReference>
<dbReference type="Gene3D" id="2.40.30.10">
    <property type="entry name" value="Translation factors"/>
    <property type="match status" value="1"/>
</dbReference>
<dbReference type="HAMAP" id="MF_00144">
    <property type="entry name" value="tRNA_thiouridyl_MnmA"/>
    <property type="match status" value="1"/>
</dbReference>
<dbReference type="InterPro" id="IPR004506">
    <property type="entry name" value="MnmA-like"/>
</dbReference>
<dbReference type="InterPro" id="IPR046885">
    <property type="entry name" value="MnmA-like_C"/>
</dbReference>
<dbReference type="InterPro" id="IPR046884">
    <property type="entry name" value="MnmA-like_central"/>
</dbReference>
<dbReference type="InterPro" id="IPR023382">
    <property type="entry name" value="MnmA-like_central_sf"/>
</dbReference>
<dbReference type="InterPro" id="IPR014729">
    <property type="entry name" value="Rossmann-like_a/b/a_fold"/>
</dbReference>
<dbReference type="NCBIfam" id="NF001138">
    <property type="entry name" value="PRK00143.1"/>
    <property type="match status" value="1"/>
</dbReference>
<dbReference type="NCBIfam" id="TIGR00420">
    <property type="entry name" value="trmU"/>
    <property type="match status" value="1"/>
</dbReference>
<dbReference type="PANTHER" id="PTHR11933:SF5">
    <property type="entry name" value="MITOCHONDRIAL TRNA-SPECIFIC 2-THIOURIDYLASE 1"/>
    <property type="match status" value="1"/>
</dbReference>
<dbReference type="PANTHER" id="PTHR11933">
    <property type="entry name" value="TRNA 5-METHYLAMINOMETHYL-2-THIOURIDYLATE -METHYLTRANSFERASE"/>
    <property type="match status" value="1"/>
</dbReference>
<dbReference type="Pfam" id="PF03054">
    <property type="entry name" value="tRNA_Me_trans"/>
    <property type="match status" value="1"/>
</dbReference>
<dbReference type="Pfam" id="PF20258">
    <property type="entry name" value="tRNA_Me_trans_C"/>
    <property type="match status" value="1"/>
</dbReference>
<dbReference type="Pfam" id="PF20259">
    <property type="entry name" value="tRNA_Me_trans_M"/>
    <property type="match status" value="1"/>
</dbReference>
<dbReference type="SUPFAM" id="SSF52402">
    <property type="entry name" value="Adenine nucleotide alpha hydrolases-like"/>
    <property type="match status" value="1"/>
</dbReference>
<reference key="1">
    <citation type="journal article" date="2014" name="Stand. Genomic Sci.">
        <title>Complete genome sequence of Anabaena variabilis ATCC 29413.</title>
        <authorList>
            <person name="Thiel T."/>
            <person name="Pratte B.S."/>
            <person name="Zhong J."/>
            <person name="Goodwin L."/>
            <person name="Copeland A."/>
            <person name="Lucas S."/>
            <person name="Han C."/>
            <person name="Pitluck S."/>
            <person name="Land M.L."/>
            <person name="Kyrpides N.C."/>
            <person name="Woyke T."/>
        </authorList>
    </citation>
    <scope>NUCLEOTIDE SEQUENCE [LARGE SCALE GENOMIC DNA]</scope>
    <source>
        <strain>ATCC 29413 / PCC 7937</strain>
    </source>
</reference>
<comment type="function">
    <text evidence="1">Catalyzes the 2-thiolation of uridine at the wobble position (U34) of tRNA, leading to the formation of s(2)U34.</text>
</comment>
<comment type="catalytic activity">
    <reaction evidence="1">
        <text>S-sulfanyl-L-cysteinyl-[protein] + uridine(34) in tRNA + AH2 + ATP = 2-thiouridine(34) in tRNA + L-cysteinyl-[protein] + A + AMP + diphosphate + H(+)</text>
        <dbReference type="Rhea" id="RHEA:47032"/>
        <dbReference type="Rhea" id="RHEA-COMP:10131"/>
        <dbReference type="Rhea" id="RHEA-COMP:11726"/>
        <dbReference type="Rhea" id="RHEA-COMP:11727"/>
        <dbReference type="Rhea" id="RHEA-COMP:11728"/>
        <dbReference type="ChEBI" id="CHEBI:13193"/>
        <dbReference type="ChEBI" id="CHEBI:15378"/>
        <dbReference type="ChEBI" id="CHEBI:17499"/>
        <dbReference type="ChEBI" id="CHEBI:29950"/>
        <dbReference type="ChEBI" id="CHEBI:30616"/>
        <dbReference type="ChEBI" id="CHEBI:33019"/>
        <dbReference type="ChEBI" id="CHEBI:61963"/>
        <dbReference type="ChEBI" id="CHEBI:65315"/>
        <dbReference type="ChEBI" id="CHEBI:87170"/>
        <dbReference type="ChEBI" id="CHEBI:456215"/>
        <dbReference type="EC" id="2.8.1.13"/>
    </reaction>
</comment>
<comment type="subcellular location">
    <subcellularLocation>
        <location evidence="1">Cytoplasm</location>
    </subcellularLocation>
</comment>
<comment type="similarity">
    <text evidence="1">Belongs to the MnmA/TRMU family.</text>
</comment>
<keyword id="KW-0067">ATP-binding</keyword>
<keyword id="KW-0963">Cytoplasm</keyword>
<keyword id="KW-1015">Disulfide bond</keyword>
<keyword id="KW-0547">Nucleotide-binding</keyword>
<keyword id="KW-0694">RNA-binding</keyword>
<keyword id="KW-0808">Transferase</keyword>
<keyword id="KW-0819">tRNA processing</keyword>
<keyword id="KW-0820">tRNA-binding</keyword>
<proteinExistence type="inferred from homology"/>
<feature type="chain" id="PRO_0000349509" description="tRNA-specific 2-thiouridylase MnmA">
    <location>
        <begin position="1"/>
        <end position="352"/>
    </location>
</feature>
<feature type="region of interest" description="Interaction with tRNA" evidence="1">
    <location>
        <begin position="143"/>
        <end position="145"/>
    </location>
</feature>
<feature type="region of interest" description="Interaction with tRNA" evidence="1">
    <location>
        <begin position="298"/>
        <end position="299"/>
    </location>
</feature>
<feature type="active site" description="Nucleophile" evidence="1">
    <location>
        <position position="94"/>
    </location>
</feature>
<feature type="active site" description="Cysteine persulfide intermediate" evidence="1">
    <location>
        <position position="193"/>
    </location>
</feature>
<feature type="binding site" evidence="1">
    <location>
        <begin position="7"/>
        <end position="14"/>
    </location>
    <ligand>
        <name>ATP</name>
        <dbReference type="ChEBI" id="CHEBI:30616"/>
    </ligand>
</feature>
<feature type="binding site" evidence="1">
    <location>
        <position position="33"/>
    </location>
    <ligand>
        <name>ATP</name>
        <dbReference type="ChEBI" id="CHEBI:30616"/>
    </ligand>
</feature>
<feature type="binding site" evidence="1">
    <location>
        <position position="119"/>
    </location>
    <ligand>
        <name>ATP</name>
        <dbReference type="ChEBI" id="CHEBI:30616"/>
    </ligand>
</feature>
<feature type="site" description="Interaction with tRNA" evidence="1">
    <location>
        <position position="120"/>
    </location>
</feature>
<feature type="site" description="Interaction with tRNA" evidence="1">
    <location>
        <position position="331"/>
    </location>
</feature>
<feature type="disulfide bond" description="Alternate" evidence="1">
    <location>
        <begin position="94"/>
        <end position="193"/>
    </location>
</feature>